<gene>
    <name evidence="2" type="primary">speA</name>
    <name type="ordered locus">SF2931</name>
    <name type="ordered locus">S3133</name>
</gene>
<accession>Q83Q93</accession>
<accession>Q7UBN8</accession>
<feature type="chain" id="PRO_0000149978" description="Biosynthetic arginine decarboxylase">
    <location>
        <begin position="1"/>
        <end position="662"/>
    </location>
</feature>
<feature type="binding site" evidence="2">
    <location>
        <begin position="307"/>
        <end position="317"/>
    </location>
    <ligand>
        <name>substrate</name>
    </ligand>
</feature>
<feature type="modified residue" description="N6-(pyridoxal phosphate)lysine" evidence="2">
    <location>
        <position position="127"/>
    </location>
</feature>
<feature type="sequence conflict" description="In Ref. 1." evidence="3" ref="1">
    <original>E</original>
    <variation>DAANLLI</variation>
    <location>
        <position position="658"/>
    </location>
</feature>
<evidence type="ECO:0000250" key="1"/>
<evidence type="ECO:0000255" key="2">
    <source>
        <dbReference type="HAMAP-Rule" id="MF_01417"/>
    </source>
</evidence>
<evidence type="ECO:0000305" key="3"/>
<sequence>MSDDMSMGLPSSAGEHGVLRSMQEVAMSSQEASKMLRTYNIAWWGNNYYDVNELGHISVCPDPDVPEARVDLAQLVKTREAQGQRLPALFCFPQILQHRLRSINAAFKRARESYGYNGDYFLVYPIKVNQHRRVIESLIHSGEPLGLEAGSKAELMAVLAHAGMTRSVIVCNGYKDREYIRLALIGEKMGHKVYLVIEKMSEIAIVLDEAERLNVVPRLGVRARLASQGSGKWQSSGGEKSKFGLAATQVLQLVETLREAGRLDSLQLLHFHLGSQMANIRDIATGVRESARFYVELHKLGVNIQCFDVGGGLGVDYEGTRSQSDCSVNYGLNEYANNIIWAIGDACEENGLPHPTVITESGRAVTAHHTVLVSNIIGVERNEYTVPTAPVEDAPRALQSMWETWQEMHEPGTRRSLREWLHDSQMDLHDIHIGYSSGTFSLQERAWAEQLYLSMCHEVQKQLDPQNRAHRPIIDELQERMADKMYVNFSLFQSMPDAWGIDQLFPVLPLEGLDQVPERRAVLLDITCDSDGAIDHYIDGDGIATTMPMPEYDPENPPMLGFFMVGAYQEILGNMHNLFGDTEAVDVFVFPDGSVEVELSDEGDTVADMLQYVQLDPKTLLTQFRDQVKKTDLDAELQQQFLEEFEAGLYGYTYLEDENLLI</sequence>
<name>SPEA_SHIFL</name>
<comment type="function">
    <text evidence="2">Catalyzes the biosynthesis of agmatine from arginine.</text>
</comment>
<comment type="catalytic activity">
    <reaction evidence="2">
        <text>L-arginine + H(+) = agmatine + CO2</text>
        <dbReference type="Rhea" id="RHEA:17641"/>
        <dbReference type="ChEBI" id="CHEBI:15378"/>
        <dbReference type="ChEBI" id="CHEBI:16526"/>
        <dbReference type="ChEBI" id="CHEBI:32682"/>
        <dbReference type="ChEBI" id="CHEBI:58145"/>
        <dbReference type="EC" id="4.1.1.19"/>
    </reaction>
</comment>
<comment type="cofactor">
    <cofactor evidence="2">
        <name>Mg(2+)</name>
        <dbReference type="ChEBI" id="CHEBI:18420"/>
    </cofactor>
</comment>
<comment type="cofactor">
    <cofactor evidence="2">
        <name>pyridoxal 5'-phosphate</name>
        <dbReference type="ChEBI" id="CHEBI:597326"/>
    </cofactor>
</comment>
<comment type="pathway">
    <text evidence="2">Amine and polyamine biosynthesis; agmatine biosynthesis; agmatine from L-arginine: step 1/1.</text>
</comment>
<comment type="subunit">
    <text evidence="1">Homotetramer.</text>
</comment>
<comment type="subcellular location">
    <subcellularLocation>
        <location evidence="1">Periplasm</location>
    </subcellularLocation>
</comment>
<comment type="similarity">
    <text evidence="2">Belongs to the Orn/Lys/Arg decarboxylase class-II family. SpeA subfamily.</text>
</comment>
<comment type="sequence caution" evidence="3">
    <conflict type="erroneous initiation">
        <sequence resource="EMBL-CDS" id="AAN44412"/>
    </conflict>
</comment>
<organism>
    <name type="scientific">Shigella flexneri</name>
    <dbReference type="NCBI Taxonomy" id="623"/>
    <lineage>
        <taxon>Bacteria</taxon>
        <taxon>Pseudomonadati</taxon>
        <taxon>Pseudomonadota</taxon>
        <taxon>Gammaproteobacteria</taxon>
        <taxon>Enterobacterales</taxon>
        <taxon>Enterobacteriaceae</taxon>
        <taxon>Shigella</taxon>
    </lineage>
</organism>
<dbReference type="EC" id="4.1.1.19" evidence="2"/>
<dbReference type="EMBL" id="AE005674">
    <property type="protein sequence ID" value="AAN44412.1"/>
    <property type="status" value="ALT_INIT"/>
    <property type="molecule type" value="Genomic_DNA"/>
</dbReference>
<dbReference type="EMBL" id="AE014073">
    <property type="protein sequence ID" value="AAP18235.1"/>
    <property type="molecule type" value="Genomic_DNA"/>
</dbReference>
<dbReference type="RefSeq" id="NP_708705.1">
    <property type="nucleotide sequence ID" value="NC_004337.2"/>
</dbReference>
<dbReference type="SMR" id="Q83Q93"/>
<dbReference type="STRING" id="198214.SF2931"/>
<dbReference type="PaxDb" id="198214-SF2931"/>
<dbReference type="GeneID" id="1026003"/>
<dbReference type="KEGG" id="sfl:SF2931"/>
<dbReference type="KEGG" id="sfx:S3133"/>
<dbReference type="PATRIC" id="fig|198214.7.peg.3487"/>
<dbReference type="HOGENOM" id="CLU_027243_1_0_6"/>
<dbReference type="UniPathway" id="UPA00186">
    <property type="reaction ID" value="UER00284"/>
</dbReference>
<dbReference type="Proteomes" id="UP000001006">
    <property type="component" value="Chromosome"/>
</dbReference>
<dbReference type="Proteomes" id="UP000002673">
    <property type="component" value="Chromosome"/>
</dbReference>
<dbReference type="GO" id="GO:0042597">
    <property type="term" value="C:periplasmic space"/>
    <property type="evidence" value="ECO:0007669"/>
    <property type="project" value="UniProtKB-SubCell"/>
</dbReference>
<dbReference type="GO" id="GO:0008792">
    <property type="term" value="F:arginine decarboxylase activity"/>
    <property type="evidence" value="ECO:0007669"/>
    <property type="project" value="UniProtKB-UniRule"/>
</dbReference>
<dbReference type="GO" id="GO:0046872">
    <property type="term" value="F:metal ion binding"/>
    <property type="evidence" value="ECO:0007669"/>
    <property type="project" value="UniProtKB-KW"/>
</dbReference>
<dbReference type="GO" id="GO:0006527">
    <property type="term" value="P:arginine catabolic process"/>
    <property type="evidence" value="ECO:0007669"/>
    <property type="project" value="InterPro"/>
</dbReference>
<dbReference type="GO" id="GO:0033388">
    <property type="term" value="P:putrescine biosynthetic process from arginine"/>
    <property type="evidence" value="ECO:0007669"/>
    <property type="project" value="TreeGrafter"/>
</dbReference>
<dbReference type="GO" id="GO:0008295">
    <property type="term" value="P:spermidine biosynthetic process"/>
    <property type="evidence" value="ECO:0007669"/>
    <property type="project" value="UniProtKB-UniRule"/>
</dbReference>
<dbReference type="CDD" id="cd06830">
    <property type="entry name" value="PLPDE_III_ADC"/>
    <property type="match status" value="1"/>
</dbReference>
<dbReference type="FunFam" id="1.10.287.3440:FF:000001">
    <property type="entry name" value="Biosynthetic arginine decarboxylase"/>
    <property type="match status" value="1"/>
</dbReference>
<dbReference type="FunFam" id="1.20.58.930:FF:000001">
    <property type="entry name" value="Biosynthetic arginine decarboxylase"/>
    <property type="match status" value="1"/>
</dbReference>
<dbReference type="FunFam" id="2.40.37.10:FF:000001">
    <property type="entry name" value="Biosynthetic arginine decarboxylase"/>
    <property type="match status" value="1"/>
</dbReference>
<dbReference type="FunFam" id="3.20.20.10:FF:000001">
    <property type="entry name" value="Biosynthetic arginine decarboxylase"/>
    <property type="match status" value="1"/>
</dbReference>
<dbReference type="Gene3D" id="1.10.287.3440">
    <property type="match status" value="1"/>
</dbReference>
<dbReference type="Gene3D" id="1.20.58.930">
    <property type="match status" value="1"/>
</dbReference>
<dbReference type="Gene3D" id="3.20.20.10">
    <property type="entry name" value="Alanine racemase"/>
    <property type="match status" value="1"/>
</dbReference>
<dbReference type="Gene3D" id="2.40.37.10">
    <property type="entry name" value="Lyase, Ornithine Decarboxylase, Chain A, domain 1"/>
    <property type="match status" value="1"/>
</dbReference>
<dbReference type="HAMAP" id="MF_01417">
    <property type="entry name" value="SpeA"/>
    <property type="match status" value="1"/>
</dbReference>
<dbReference type="InterPro" id="IPR009006">
    <property type="entry name" value="Ala_racemase/Decarboxylase_C"/>
</dbReference>
<dbReference type="InterPro" id="IPR040634">
    <property type="entry name" value="Arg_decarb_HB"/>
</dbReference>
<dbReference type="InterPro" id="IPR041128">
    <property type="entry name" value="Arg_decarbox_C"/>
</dbReference>
<dbReference type="InterPro" id="IPR002985">
    <property type="entry name" value="Arg_decrbxlase"/>
</dbReference>
<dbReference type="InterPro" id="IPR022657">
    <property type="entry name" value="De-COase2_CS"/>
</dbReference>
<dbReference type="InterPro" id="IPR022644">
    <property type="entry name" value="De-COase2_N"/>
</dbReference>
<dbReference type="InterPro" id="IPR022653">
    <property type="entry name" value="De-COase2_pyr-phos_BS"/>
</dbReference>
<dbReference type="InterPro" id="IPR000183">
    <property type="entry name" value="Orn/DAP/Arg_de-COase"/>
</dbReference>
<dbReference type="InterPro" id="IPR029066">
    <property type="entry name" value="PLP-binding_barrel"/>
</dbReference>
<dbReference type="NCBIfam" id="NF003763">
    <property type="entry name" value="PRK05354.1"/>
    <property type="match status" value="1"/>
</dbReference>
<dbReference type="NCBIfam" id="TIGR01273">
    <property type="entry name" value="speA"/>
    <property type="match status" value="1"/>
</dbReference>
<dbReference type="PANTHER" id="PTHR43295">
    <property type="entry name" value="ARGININE DECARBOXYLASE"/>
    <property type="match status" value="1"/>
</dbReference>
<dbReference type="PANTHER" id="PTHR43295:SF9">
    <property type="entry name" value="BIOSYNTHETIC ARGININE DECARBOXYLASE"/>
    <property type="match status" value="1"/>
</dbReference>
<dbReference type="Pfam" id="PF17810">
    <property type="entry name" value="Arg_decarb_HB"/>
    <property type="match status" value="1"/>
</dbReference>
<dbReference type="Pfam" id="PF17944">
    <property type="entry name" value="Arg_decarbox_C"/>
    <property type="match status" value="1"/>
</dbReference>
<dbReference type="Pfam" id="PF02784">
    <property type="entry name" value="Orn_Arg_deC_N"/>
    <property type="match status" value="1"/>
</dbReference>
<dbReference type="PIRSF" id="PIRSF001336">
    <property type="entry name" value="Arg_decrbxlase"/>
    <property type="match status" value="1"/>
</dbReference>
<dbReference type="PRINTS" id="PR01180">
    <property type="entry name" value="ARGDCRBXLASE"/>
</dbReference>
<dbReference type="PRINTS" id="PR01179">
    <property type="entry name" value="ODADCRBXLASE"/>
</dbReference>
<dbReference type="SUPFAM" id="SSF50621">
    <property type="entry name" value="Alanine racemase C-terminal domain-like"/>
    <property type="match status" value="1"/>
</dbReference>
<dbReference type="SUPFAM" id="SSF51419">
    <property type="entry name" value="PLP-binding barrel"/>
    <property type="match status" value="1"/>
</dbReference>
<dbReference type="PROSITE" id="PS00878">
    <property type="entry name" value="ODR_DC_2_1"/>
    <property type="match status" value="1"/>
</dbReference>
<dbReference type="PROSITE" id="PS00879">
    <property type="entry name" value="ODR_DC_2_2"/>
    <property type="match status" value="1"/>
</dbReference>
<keyword id="KW-0210">Decarboxylase</keyword>
<keyword id="KW-0456">Lyase</keyword>
<keyword id="KW-0460">Magnesium</keyword>
<keyword id="KW-0479">Metal-binding</keyword>
<keyword id="KW-0574">Periplasm</keyword>
<keyword id="KW-0620">Polyamine biosynthesis</keyword>
<keyword id="KW-0661">Putrescine biosynthesis</keyword>
<keyword id="KW-0663">Pyridoxal phosphate</keyword>
<keyword id="KW-1185">Reference proteome</keyword>
<keyword id="KW-0745">Spermidine biosynthesis</keyword>
<reference key="1">
    <citation type="journal article" date="2002" name="Nucleic Acids Res.">
        <title>Genome sequence of Shigella flexneri 2a: insights into pathogenicity through comparison with genomes of Escherichia coli K12 and O157.</title>
        <authorList>
            <person name="Jin Q."/>
            <person name="Yuan Z."/>
            <person name="Xu J."/>
            <person name="Wang Y."/>
            <person name="Shen Y."/>
            <person name="Lu W."/>
            <person name="Wang J."/>
            <person name="Liu H."/>
            <person name="Yang J."/>
            <person name="Yang F."/>
            <person name="Zhang X."/>
            <person name="Zhang J."/>
            <person name="Yang G."/>
            <person name="Wu H."/>
            <person name="Qu D."/>
            <person name="Dong J."/>
            <person name="Sun L."/>
            <person name="Xue Y."/>
            <person name="Zhao A."/>
            <person name="Gao Y."/>
            <person name="Zhu J."/>
            <person name="Kan B."/>
            <person name="Ding K."/>
            <person name="Chen S."/>
            <person name="Cheng H."/>
            <person name="Yao Z."/>
            <person name="He B."/>
            <person name="Chen R."/>
            <person name="Ma D."/>
            <person name="Qiang B."/>
            <person name="Wen Y."/>
            <person name="Hou Y."/>
            <person name="Yu J."/>
        </authorList>
    </citation>
    <scope>NUCLEOTIDE SEQUENCE [LARGE SCALE GENOMIC DNA]</scope>
    <source>
        <strain>301 / Serotype 2a</strain>
    </source>
</reference>
<reference key="2">
    <citation type="journal article" date="2003" name="Infect. Immun.">
        <title>Complete genome sequence and comparative genomics of Shigella flexneri serotype 2a strain 2457T.</title>
        <authorList>
            <person name="Wei J."/>
            <person name="Goldberg M.B."/>
            <person name="Burland V."/>
            <person name="Venkatesan M.M."/>
            <person name="Deng W."/>
            <person name="Fournier G."/>
            <person name="Mayhew G.F."/>
            <person name="Plunkett G. III"/>
            <person name="Rose D.J."/>
            <person name="Darling A."/>
            <person name="Mau B."/>
            <person name="Perna N.T."/>
            <person name="Payne S.M."/>
            <person name="Runyen-Janecky L.J."/>
            <person name="Zhou S."/>
            <person name="Schwartz D.C."/>
            <person name="Blattner F.R."/>
        </authorList>
    </citation>
    <scope>NUCLEOTIDE SEQUENCE [LARGE SCALE GENOMIC DNA]</scope>
    <source>
        <strain>ATCC 700930 / 2457T / Serotype 2a</strain>
    </source>
</reference>
<proteinExistence type="inferred from homology"/>
<protein>
    <recommendedName>
        <fullName evidence="2">Biosynthetic arginine decarboxylase</fullName>
        <shortName evidence="2">ADC</shortName>
        <ecNumber evidence="2">4.1.1.19</ecNumber>
    </recommendedName>
</protein>